<dbReference type="EC" id="2.5.1.141" evidence="1"/>
<dbReference type="EMBL" id="CP000769">
    <property type="protein sequence ID" value="ABS25155.1"/>
    <property type="molecule type" value="Genomic_DNA"/>
</dbReference>
<dbReference type="RefSeq" id="WP_011985261.1">
    <property type="nucleotide sequence ID" value="NC_009675.1"/>
</dbReference>
<dbReference type="SMR" id="A7H8V9"/>
<dbReference type="STRING" id="404589.Anae109_0946"/>
<dbReference type="KEGG" id="afw:Anae109_0946"/>
<dbReference type="eggNOG" id="COG0109">
    <property type="taxonomic scope" value="Bacteria"/>
</dbReference>
<dbReference type="HOGENOM" id="CLU_029631_0_0_7"/>
<dbReference type="OrthoDB" id="9814417at2"/>
<dbReference type="UniPathway" id="UPA00834">
    <property type="reaction ID" value="UER00712"/>
</dbReference>
<dbReference type="Proteomes" id="UP000006382">
    <property type="component" value="Chromosome"/>
</dbReference>
<dbReference type="GO" id="GO:0005886">
    <property type="term" value="C:plasma membrane"/>
    <property type="evidence" value="ECO:0007669"/>
    <property type="project" value="UniProtKB-SubCell"/>
</dbReference>
<dbReference type="GO" id="GO:0008495">
    <property type="term" value="F:protoheme IX farnesyltransferase activity"/>
    <property type="evidence" value="ECO:0007669"/>
    <property type="project" value="UniProtKB-UniRule"/>
</dbReference>
<dbReference type="GO" id="GO:0048034">
    <property type="term" value="P:heme O biosynthetic process"/>
    <property type="evidence" value="ECO:0007669"/>
    <property type="project" value="UniProtKB-UniRule"/>
</dbReference>
<dbReference type="CDD" id="cd13957">
    <property type="entry name" value="PT_UbiA_Cox10"/>
    <property type="match status" value="1"/>
</dbReference>
<dbReference type="Gene3D" id="1.10.357.140">
    <property type="entry name" value="UbiA prenyltransferase"/>
    <property type="match status" value="1"/>
</dbReference>
<dbReference type="HAMAP" id="MF_00154">
    <property type="entry name" value="CyoE_CtaB"/>
    <property type="match status" value="1"/>
</dbReference>
<dbReference type="InterPro" id="IPR006369">
    <property type="entry name" value="Protohaem_IX_farnesylTrfase"/>
</dbReference>
<dbReference type="InterPro" id="IPR000537">
    <property type="entry name" value="UbiA_prenyltransferase"/>
</dbReference>
<dbReference type="InterPro" id="IPR030470">
    <property type="entry name" value="UbiA_prenylTrfase_CS"/>
</dbReference>
<dbReference type="InterPro" id="IPR044878">
    <property type="entry name" value="UbiA_sf"/>
</dbReference>
<dbReference type="NCBIfam" id="TIGR01473">
    <property type="entry name" value="cyoE_ctaB"/>
    <property type="match status" value="1"/>
</dbReference>
<dbReference type="PANTHER" id="PTHR43448">
    <property type="entry name" value="PROTOHEME IX FARNESYLTRANSFERASE, MITOCHONDRIAL"/>
    <property type="match status" value="1"/>
</dbReference>
<dbReference type="PANTHER" id="PTHR43448:SF2">
    <property type="entry name" value="PROTOHEME IX FARNESYLTRANSFERASE, MITOCHONDRIAL"/>
    <property type="match status" value="1"/>
</dbReference>
<dbReference type="Pfam" id="PF01040">
    <property type="entry name" value="UbiA"/>
    <property type="match status" value="1"/>
</dbReference>
<dbReference type="PROSITE" id="PS00943">
    <property type="entry name" value="UBIA"/>
    <property type="match status" value="1"/>
</dbReference>
<name>COXX_ANADF</name>
<accession>A7H8V9</accession>
<protein>
    <recommendedName>
        <fullName evidence="1">Protoheme IX farnesyltransferase</fullName>
        <ecNumber evidence="1">2.5.1.141</ecNumber>
    </recommendedName>
    <alternativeName>
        <fullName evidence="1">Heme B farnesyltransferase</fullName>
    </alternativeName>
    <alternativeName>
        <fullName evidence="1">Heme O synthase</fullName>
    </alternativeName>
</protein>
<reference key="1">
    <citation type="journal article" date="2015" name="Genome Announc.">
        <title>Complete genome sequence of Anaeromyxobacter sp. Fw109-5, an anaerobic, metal-reducing bacterium isolated from a contaminated subsurface environment.</title>
        <authorList>
            <person name="Hwang C."/>
            <person name="Copeland A."/>
            <person name="Lucas S."/>
            <person name="Lapidus A."/>
            <person name="Barry K."/>
            <person name="Glavina Del Rio T."/>
            <person name="Dalin E."/>
            <person name="Tice H."/>
            <person name="Pitluck S."/>
            <person name="Sims D."/>
            <person name="Brettin T."/>
            <person name="Bruce D.C."/>
            <person name="Detter J.C."/>
            <person name="Han C.S."/>
            <person name="Schmutz J."/>
            <person name="Larimer F.W."/>
            <person name="Land M.L."/>
            <person name="Hauser L.J."/>
            <person name="Kyrpides N."/>
            <person name="Lykidis A."/>
            <person name="Richardson P."/>
            <person name="Belieav A."/>
            <person name="Sanford R.A."/>
            <person name="Loeffler F.E."/>
            <person name="Fields M.W."/>
        </authorList>
    </citation>
    <scope>NUCLEOTIDE SEQUENCE [LARGE SCALE GENOMIC DNA]</scope>
    <source>
        <strain>Fw109-5</strain>
    </source>
</reference>
<keyword id="KW-0997">Cell inner membrane</keyword>
<keyword id="KW-1003">Cell membrane</keyword>
<keyword id="KW-0350">Heme biosynthesis</keyword>
<keyword id="KW-0472">Membrane</keyword>
<keyword id="KW-1185">Reference proteome</keyword>
<keyword id="KW-0808">Transferase</keyword>
<keyword id="KW-0812">Transmembrane</keyword>
<keyword id="KW-1133">Transmembrane helix</keyword>
<sequence length="296" mass="30903">MTIATASARARPSSLQYAKDLLLLAKPRLSGLVIVTSAGGLALAPGHVAPARAALTVLATAAVVGAANALNCWMEREIDARMRRTRDRPLPAGRVDPFTALGLGIMVPVFALPVLALVANPLTAALAFVALVTYVAVYTPMKQRSTLALLVGAVPGAIPPLMGWTAATGRLDAGGLALFALLFAWQLPHFLAVSIYLRDDYARGGLRVFSIVHGERTTRAWIAATAAALVPVSLLLVPLRVAGPSYGAVAAVLGVALAGYAFAGVGREGGRWARNFFLATILYLTLLFVALFLGAR</sequence>
<gene>
    <name evidence="1" type="primary">ctaB</name>
    <name type="ordered locus">Anae109_0946</name>
</gene>
<proteinExistence type="inferred from homology"/>
<comment type="function">
    <text evidence="1">Converts heme B (protoheme IX) to heme O by substitution of the vinyl group on carbon 2 of heme B porphyrin ring with a hydroxyethyl farnesyl side group.</text>
</comment>
<comment type="catalytic activity">
    <reaction evidence="1">
        <text>heme b + (2E,6E)-farnesyl diphosphate + H2O = Fe(II)-heme o + diphosphate</text>
        <dbReference type="Rhea" id="RHEA:28070"/>
        <dbReference type="ChEBI" id="CHEBI:15377"/>
        <dbReference type="ChEBI" id="CHEBI:33019"/>
        <dbReference type="ChEBI" id="CHEBI:60344"/>
        <dbReference type="ChEBI" id="CHEBI:60530"/>
        <dbReference type="ChEBI" id="CHEBI:175763"/>
        <dbReference type="EC" id="2.5.1.141"/>
    </reaction>
</comment>
<comment type="pathway">
    <text evidence="1">Porphyrin-containing compound metabolism; heme O biosynthesis; heme O from protoheme: step 1/1.</text>
</comment>
<comment type="subcellular location">
    <subcellularLocation>
        <location evidence="1">Cell inner membrane</location>
        <topology evidence="1">Multi-pass membrane protein</topology>
    </subcellularLocation>
</comment>
<comment type="miscellaneous">
    <text evidence="1">Carbon 2 of the heme B porphyrin ring is defined according to the Fischer nomenclature.</text>
</comment>
<comment type="similarity">
    <text evidence="1">Belongs to the UbiA prenyltransferase family. Protoheme IX farnesyltransferase subfamily.</text>
</comment>
<organism>
    <name type="scientific">Anaeromyxobacter sp. (strain Fw109-5)</name>
    <dbReference type="NCBI Taxonomy" id="404589"/>
    <lineage>
        <taxon>Bacteria</taxon>
        <taxon>Pseudomonadati</taxon>
        <taxon>Myxococcota</taxon>
        <taxon>Myxococcia</taxon>
        <taxon>Myxococcales</taxon>
        <taxon>Cystobacterineae</taxon>
        <taxon>Anaeromyxobacteraceae</taxon>
        <taxon>Anaeromyxobacter</taxon>
    </lineage>
</organism>
<feature type="chain" id="PRO_0000326992" description="Protoheme IX farnesyltransferase">
    <location>
        <begin position="1"/>
        <end position="296"/>
    </location>
</feature>
<feature type="transmembrane region" description="Helical" evidence="1">
    <location>
        <begin position="29"/>
        <end position="49"/>
    </location>
</feature>
<feature type="transmembrane region" description="Helical" evidence="1">
    <location>
        <begin position="54"/>
        <end position="74"/>
    </location>
</feature>
<feature type="transmembrane region" description="Helical" evidence="1">
    <location>
        <begin position="98"/>
        <end position="118"/>
    </location>
</feature>
<feature type="transmembrane region" description="Helical" evidence="1">
    <location>
        <begin position="121"/>
        <end position="141"/>
    </location>
</feature>
<feature type="transmembrane region" description="Helical" evidence="1">
    <location>
        <begin position="147"/>
        <end position="167"/>
    </location>
</feature>
<feature type="transmembrane region" description="Helical" evidence="1">
    <location>
        <begin position="175"/>
        <end position="195"/>
    </location>
</feature>
<feature type="transmembrane region" description="Helical" evidence="1">
    <location>
        <begin position="221"/>
        <end position="241"/>
    </location>
</feature>
<feature type="transmembrane region" description="Helical" evidence="1">
    <location>
        <begin position="246"/>
        <end position="266"/>
    </location>
</feature>
<feature type="transmembrane region" description="Helical" evidence="1">
    <location>
        <begin position="275"/>
        <end position="295"/>
    </location>
</feature>
<evidence type="ECO:0000255" key="1">
    <source>
        <dbReference type="HAMAP-Rule" id="MF_00154"/>
    </source>
</evidence>